<protein>
    <recommendedName>
        <fullName evidence="1">Peptide methionine sulfoxide reductase MsrB</fullName>
        <ecNumber evidence="1">1.8.4.12</ecNumber>
    </recommendedName>
    <alternativeName>
        <fullName evidence="1">Peptide-methionine (R)-S-oxide reductase</fullName>
    </alternativeName>
</protein>
<accession>Q5WH73</accession>
<comment type="catalytic activity">
    <reaction evidence="1">
        <text>L-methionyl-[protein] + [thioredoxin]-disulfide + H2O = L-methionyl-(R)-S-oxide-[protein] + [thioredoxin]-dithiol</text>
        <dbReference type="Rhea" id="RHEA:24164"/>
        <dbReference type="Rhea" id="RHEA-COMP:10698"/>
        <dbReference type="Rhea" id="RHEA-COMP:10700"/>
        <dbReference type="Rhea" id="RHEA-COMP:12313"/>
        <dbReference type="Rhea" id="RHEA-COMP:12314"/>
        <dbReference type="ChEBI" id="CHEBI:15377"/>
        <dbReference type="ChEBI" id="CHEBI:16044"/>
        <dbReference type="ChEBI" id="CHEBI:29950"/>
        <dbReference type="ChEBI" id="CHEBI:45764"/>
        <dbReference type="ChEBI" id="CHEBI:50058"/>
        <dbReference type="EC" id="1.8.4.12"/>
    </reaction>
</comment>
<comment type="similarity">
    <text evidence="1">Belongs to the MsrB Met sulfoxide reductase family.</text>
</comment>
<proteinExistence type="inferred from homology"/>
<dbReference type="EC" id="1.8.4.12" evidence="1"/>
<dbReference type="EMBL" id="AP006627">
    <property type="protein sequence ID" value="BAD64282.1"/>
    <property type="molecule type" value="Genomic_DNA"/>
</dbReference>
<dbReference type="RefSeq" id="WP_011246590.1">
    <property type="nucleotide sequence ID" value="NC_006582.1"/>
</dbReference>
<dbReference type="SMR" id="Q5WH73"/>
<dbReference type="STRING" id="66692.ABC1747"/>
<dbReference type="KEGG" id="bcl:ABC1747"/>
<dbReference type="eggNOG" id="COG0229">
    <property type="taxonomic scope" value="Bacteria"/>
</dbReference>
<dbReference type="HOGENOM" id="CLU_031040_8_5_9"/>
<dbReference type="OrthoDB" id="4174719at2"/>
<dbReference type="Proteomes" id="UP000001168">
    <property type="component" value="Chromosome"/>
</dbReference>
<dbReference type="GO" id="GO:0005737">
    <property type="term" value="C:cytoplasm"/>
    <property type="evidence" value="ECO:0007669"/>
    <property type="project" value="TreeGrafter"/>
</dbReference>
<dbReference type="GO" id="GO:0033743">
    <property type="term" value="F:peptide-methionine (R)-S-oxide reductase activity"/>
    <property type="evidence" value="ECO:0007669"/>
    <property type="project" value="UniProtKB-UniRule"/>
</dbReference>
<dbReference type="GO" id="GO:0030091">
    <property type="term" value="P:protein repair"/>
    <property type="evidence" value="ECO:0007669"/>
    <property type="project" value="InterPro"/>
</dbReference>
<dbReference type="GO" id="GO:0006979">
    <property type="term" value="P:response to oxidative stress"/>
    <property type="evidence" value="ECO:0007669"/>
    <property type="project" value="InterPro"/>
</dbReference>
<dbReference type="FunFam" id="2.170.150.20:FF:000003">
    <property type="entry name" value="Peptide methionine sulfoxide reductase MsrB"/>
    <property type="match status" value="1"/>
</dbReference>
<dbReference type="Gene3D" id="2.170.150.20">
    <property type="entry name" value="Peptide methionine sulfoxide reductase"/>
    <property type="match status" value="1"/>
</dbReference>
<dbReference type="HAMAP" id="MF_01400">
    <property type="entry name" value="MsrB"/>
    <property type="match status" value="1"/>
</dbReference>
<dbReference type="InterPro" id="IPR028427">
    <property type="entry name" value="Met_Sox_Rdtase_MsrB"/>
</dbReference>
<dbReference type="InterPro" id="IPR002579">
    <property type="entry name" value="Met_Sox_Rdtase_MsrB_dom"/>
</dbReference>
<dbReference type="InterPro" id="IPR011057">
    <property type="entry name" value="Mss4-like_sf"/>
</dbReference>
<dbReference type="NCBIfam" id="TIGR00357">
    <property type="entry name" value="peptide-methionine (R)-S-oxide reductase MsrB"/>
    <property type="match status" value="1"/>
</dbReference>
<dbReference type="PANTHER" id="PTHR10173">
    <property type="entry name" value="METHIONINE SULFOXIDE REDUCTASE"/>
    <property type="match status" value="1"/>
</dbReference>
<dbReference type="PANTHER" id="PTHR10173:SF59">
    <property type="entry name" value="PEPTIDE METHIONINE SULFOXIDE REDUCTASE MSRA_MSRB"/>
    <property type="match status" value="1"/>
</dbReference>
<dbReference type="Pfam" id="PF01641">
    <property type="entry name" value="SelR"/>
    <property type="match status" value="1"/>
</dbReference>
<dbReference type="SUPFAM" id="SSF51316">
    <property type="entry name" value="Mss4-like"/>
    <property type="match status" value="1"/>
</dbReference>
<dbReference type="PROSITE" id="PS51790">
    <property type="entry name" value="MSRB"/>
    <property type="match status" value="1"/>
</dbReference>
<sequence length="144" mass="16386">MTKPQKDELKKKLTPIQYFVTQENGTEPPFQNEYYETEEEGIYVDVVSGKPLFSSKDKYDAGCGWPSFTKPIDEAEIIEKEDRSHFMVRTEVRSKNADSHLGHVFPDGPGPNGLRYCINSAALRFIPKAKLKEAGYGAYEKLFD</sequence>
<reference key="1">
    <citation type="submission" date="2003-10" db="EMBL/GenBank/DDBJ databases">
        <title>The complete genome sequence of the alkaliphilic Bacillus clausii KSM-K16.</title>
        <authorList>
            <person name="Takaki Y."/>
            <person name="Kageyama Y."/>
            <person name="Shimamura S."/>
            <person name="Suzuki H."/>
            <person name="Nishi S."/>
            <person name="Hatada Y."/>
            <person name="Kawai S."/>
            <person name="Ito S."/>
            <person name="Horikoshi K."/>
        </authorList>
    </citation>
    <scope>NUCLEOTIDE SEQUENCE [LARGE SCALE GENOMIC DNA]</scope>
    <source>
        <strain>KSM-K16</strain>
    </source>
</reference>
<keyword id="KW-0560">Oxidoreductase</keyword>
<keyword id="KW-1185">Reference proteome</keyword>
<gene>
    <name evidence="1" type="primary">msrB</name>
    <name type="ordered locus">ABC1747</name>
</gene>
<name>MSRB_SHOC1</name>
<organism>
    <name type="scientific">Shouchella clausii (strain KSM-K16)</name>
    <name type="common">Alkalihalobacillus clausii</name>
    <dbReference type="NCBI Taxonomy" id="66692"/>
    <lineage>
        <taxon>Bacteria</taxon>
        <taxon>Bacillati</taxon>
        <taxon>Bacillota</taxon>
        <taxon>Bacilli</taxon>
        <taxon>Bacillales</taxon>
        <taxon>Bacillaceae</taxon>
        <taxon>Shouchella</taxon>
    </lineage>
</organism>
<feature type="chain" id="PRO_0000140261" description="Peptide methionine sulfoxide reductase MsrB">
    <location>
        <begin position="1"/>
        <end position="144"/>
    </location>
</feature>
<feature type="domain" description="MsrB" evidence="2">
    <location>
        <begin position="6"/>
        <end position="128"/>
    </location>
</feature>
<feature type="active site" description="Nucleophile" evidence="2">
    <location>
        <position position="117"/>
    </location>
</feature>
<evidence type="ECO:0000255" key="1">
    <source>
        <dbReference type="HAMAP-Rule" id="MF_01400"/>
    </source>
</evidence>
<evidence type="ECO:0000255" key="2">
    <source>
        <dbReference type="PROSITE-ProRule" id="PRU01126"/>
    </source>
</evidence>